<gene>
    <name type="ordered locus">PA1210</name>
</gene>
<proteinExistence type="inferred from homology"/>
<dbReference type="EC" id="1.13.11.24"/>
<dbReference type="EMBL" id="AE004091">
    <property type="protein sequence ID" value="AAG04599.1"/>
    <property type="molecule type" value="Genomic_DNA"/>
</dbReference>
<dbReference type="PIR" id="D83493">
    <property type="entry name" value="D83493"/>
</dbReference>
<dbReference type="RefSeq" id="NP_249901.1">
    <property type="nucleotide sequence ID" value="NC_002516.2"/>
</dbReference>
<dbReference type="RefSeq" id="WP_003086661.1">
    <property type="nucleotide sequence ID" value="NZ_QZGE01000006.1"/>
</dbReference>
<dbReference type="SMR" id="Q9I4C8"/>
<dbReference type="FunCoup" id="Q9I4C8">
    <property type="interactions" value="114"/>
</dbReference>
<dbReference type="STRING" id="208964.PA1210"/>
<dbReference type="PaxDb" id="208964-PA1210"/>
<dbReference type="DNASU" id="881966"/>
<dbReference type="GeneID" id="881966"/>
<dbReference type="KEGG" id="pae:PA1210"/>
<dbReference type="PATRIC" id="fig|208964.12.peg.1256"/>
<dbReference type="PseudoCAP" id="PA1210"/>
<dbReference type="HOGENOM" id="CLU_064194_2_2_6"/>
<dbReference type="InParanoid" id="Q9I4C8"/>
<dbReference type="OrthoDB" id="9780903at2"/>
<dbReference type="PhylomeDB" id="Q9I4C8"/>
<dbReference type="BioCyc" id="PAER208964:G1FZ6-1235-MONOMER"/>
<dbReference type="UniPathway" id="UPA00724"/>
<dbReference type="Proteomes" id="UP000002438">
    <property type="component" value="Chromosome"/>
</dbReference>
<dbReference type="GO" id="GO:0046872">
    <property type="term" value="F:metal ion binding"/>
    <property type="evidence" value="ECO:0007669"/>
    <property type="project" value="UniProtKB-KW"/>
</dbReference>
<dbReference type="GO" id="GO:0008127">
    <property type="term" value="F:quercetin 2,3-dioxygenase activity"/>
    <property type="evidence" value="ECO:0007669"/>
    <property type="project" value="UniProtKB-EC"/>
</dbReference>
<dbReference type="CDD" id="cd02910">
    <property type="entry name" value="cupin_Yhhw_N"/>
    <property type="match status" value="1"/>
</dbReference>
<dbReference type="Gene3D" id="2.60.120.10">
    <property type="entry name" value="Jelly Rolls"/>
    <property type="match status" value="2"/>
</dbReference>
<dbReference type="InterPro" id="IPR012093">
    <property type="entry name" value="Pirin"/>
</dbReference>
<dbReference type="InterPro" id="IPR003829">
    <property type="entry name" value="Pirin_N_dom"/>
</dbReference>
<dbReference type="InterPro" id="IPR041602">
    <property type="entry name" value="Quercetinase_C"/>
</dbReference>
<dbReference type="InterPro" id="IPR014710">
    <property type="entry name" value="RmlC-like_jellyroll"/>
</dbReference>
<dbReference type="InterPro" id="IPR011051">
    <property type="entry name" value="RmlC_Cupin_sf"/>
</dbReference>
<dbReference type="PANTHER" id="PTHR43212">
    <property type="entry name" value="QUERCETIN 2,3-DIOXYGENASE"/>
    <property type="match status" value="1"/>
</dbReference>
<dbReference type="PANTHER" id="PTHR43212:SF3">
    <property type="entry name" value="QUERCETIN 2,3-DIOXYGENASE"/>
    <property type="match status" value="1"/>
</dbReference>
<dbReference type="Pfam" id="PF02678">
    <property type="entry name" value="Pirin"/>
    <property type="match status" value="1"/>
</dbReference>
<dbReference type="Pfam" id="PF17954">
    <property type="entry name" value="Pirin_C_2"/>
    <property type="match status" value="1"/>
</dbReference>
<dbReference type="PIRSF" id="PIRSF006232">
    <property type="entry name" value="Pirin"/>
    <property type="match status" value="1"/>
</dbReference>
<dbReference type="SUPFAM" id="SSF51182">
    <property type="entry name" value="RmlC-like cupins"/>
    <property type="match status" value="1"/>
</dbReference>
<protein>
    <recommendedName>
        <fullName>Putative quercetin 2,3-dioxygenase PA1210</fullName>
        <shortName>Putative quercetinase</shortName>
        <ecNumber>1.13.11.24</ecNumber>
    </recommendedName>
    <alternativeName>
        <fullName>Pirin-like protein PA1210</fullName>
    </alternativeName>
</protein>
<accession>Q9I4C8</accession>
<reference key="1">
    <citation type="journal article" date="2000" name="Nature">
        <title>Complete genome sequence of Pseudomonas aeruginosa PAO1, an opportunistic pathogen.</title>
        <authorList>
            <person name="Stover C.K."/>
            <person name="Pham X.-Q.T."/>
            <person name="Erwin A.L."/>
            <person name="Mizoguchi S.D."/>
            <person name="Warrener P."/>
            <person name="Hickey M.J."/>
            <person name="Brinkman F.S.L."/>
            <person name="Hufnagle W.O."/>
            <person name="Kowalik D.J."/>
            <person name="Lagrou M."/>
            <person name="Garber R.L."/>
            <person name="Goltry L."/>
            <person name="Tolentino E."/>
            <person name="Westbrock-Wadman S."/>
            <person name="Yuan Y."/>
            <person name="Brody L.L."/>
            <person name="Coulter S.N."/>
            <person name="Folger K.R."/>
            <person name="Kas A."/>
            <person name="Larbig K."/>
            <person name="Lim R.M."/>
            <person name="Smith K.A."/>
            <person name="Spencer D.H."/>
            <person name="Wong G.K.-S."/>
            <person name="Wu Z."/>
            <person name="Paulsen I.T."/>
            <person name="Reizer J."/>
            <person name="Saier M.H. Jr."/>
            <person name="Hancock R.E.W."/>
            <person name="Lory S."/>
            <person name="Olson M.V."/>
        </authorList>
    </citation>
    <scope>NUCLEOTIDE SEQUENCE [LARGE SCALE GENOMIC DNA]</scope>
    <source>
        <strain>ATCC 15692 / DSM 22644 / CIP 104116 / JCM 14847 / LMG 12228 / 1C / PRS 101 / PAO1</strain>
    </source>
</reference>
<keyword id="KW-0223">Dioxygenase</keyword>
<keyword id="KW-0479">Metal-binding</keyword>
<keyword id="KW-0560">Oxidoreductase</keyword>
<keyword id="KW-1185">Reference proteome</keyword>
<feature type="chain" id="PRO_0000214069" description="Putative quercetin 2,3-dioxygenase PA1210">
    <location>
        <begin position="1"/>
        <end position="232"/>
    </location>
</feature>
<feature type="binding site" evidence="1">
    <location>
        <position position="57"/>
    </location>
    <ligand>
        <name>a divalent metal cation</name>
        <dbReference type="ChEBI" id="CHEBI:60240"/>
    </ligand>
</feature>
<feature type="binding site" evidence="1">
    <location>
        <position position="59"/>
    </location>
    <ligand>
        <name>a divalent metal cation</name>
        <dbReference type="ChEBI" id="CHEBI:60240"/>
    </ligand>
</feature>
<feature type="binding site" evidence="1">
    <location>
        <position position="101"/>
    </location>
    <ligand>
        <name>a divalent metal cation</name>
        <dbReference type="ChEBI" id="CHEBI:60240"/>
    </ligand>
</feature>
<feature type="binding site" evidence="1">
    <location>
        <position position="103"/>
    </location>
    <ligand>
        <name>a divalent metal cation</name>
        <dbReference type="ChEBI" id="CHEBI:60240"/>
    </ligand>
</feature>
<name>Y1210_PSEAE</name>
<sequence>MIERRPFDRLGHANHGWLNARHHFSFADYYDPEREDWGRLRVWNDDEIAAGSGFPPHPHRDMEIITYVREGAITHQDSLGNKGRTEAGDVQVMSAGTGIVHSEYNLEAETTRIFQIWIIPDRRGDQPRWGSKPFPKAERDGRFVTLASGDEQDSEALHIRADAEVAAVTLKAGQSAEYALENGRRAYLVPATGSIEVNGVRAEARDGLAVRDEPTLKVTALEDSEVLLVEVA</sequence>
<organism>
    <name type="scientific">Pseudomonas aeruginosa (strain ATCC 15692 / DSM 22644 / CIP 104116 / JCM 14847 / LMG 12228 / 1C / PRS 101 / PAO1)</name>
    <dbReference type="NCBI Taxonomy" id="208964"/>
    <lineage>
        <taxon>Bacteria</taxon>
        <taxon>Pseudomonadati</taxon>
        <taxon>Pseudomonadota</taxon>
        <taxon>Gammaproteobacteria</taxon>
        <taxon>Pseudomonadales</taxon>
        <taxon>Pseudomonadaceae</taxon>
        <taxon>Pseudomonas</taxon>
    </lineage>
</organism>
<comment type="function">
    <text evidence="1">Putative quercetin 2,3-dioxygenase.</text>
</comment>
<comment type="catalytic activity">
    <reaction>
        <text>quercetin + O2 = 2-(3,4-dihydroxybenzoyloxy)-4,6-dihydroxybenzoate + CO</text>
        <dbReference type="Rhea" id="RHEA:15381"/>
        <dbReference type="ChEBI" id="CHEBI:15379"/>
        <dbReference type="ChEBI" id="CHEBI:17245"/>
        <dbReference type="ChEBI" id="CHEBI:57628"/>
        <dbReference type="ChEBI" id="CHEBI:57694"/>
        <dbReference type="EC" id="1.13.11.24"/>
    </reaction>
</comment>
<comment type="cofactor">
    <cofactor evidence="1">
        <name>a divalent metal cation</name>
        <dbReference type="ChEBI" id="CHEBI:60240"/>
    </cofactor>
    <text evidence="1">Binds 1 divalent metal cation.</text>
</comment>
<comment type="pathway">
    <text>Flavonoid metabolism; quercetin degradation.</text>
</comment>
<comment type="similarity">
    <text evidence="2">Belongs to the pirin family.</text>
</comment>
<evidence type="ECO:0000250" key="1"/>
<evidence type="ECO:0000305" key="2"/>